<feature type="chain" id="PRO_1000214891" description="Large ribosomal subunit protein bL21">
    <location>
        <begin position="1"/>
        <end position="102"/>
    </location>
</feature>
<reference key="1">
    <citation type="journal article" date="2011" name="J. Bacteriol.">
        <title>Complete genome sequence of the Thermophilic Bacterium Exiguobacterium sp. AT1b.</title>
        <authorList>
            <person name="Vishnivetskaya T.A."/>
            <person name="Lucas S."/>
            <person name="Copeland A."/>
            <person name="Lapidus A."/>
            <person name="Glavina del Rio T."/>
            <person name="Dalin E."/>
            <person name="Tice H."/>
            <person name="Bruce D.C."/>
            <person name="Goodwin L.A."/>
            <person name="Pitluck S."/>
            <person name="Saunders E."/>
            <person name="Brettin T."/>
            <person name="Detter C."/>
            <person name="Han C."/>
            <person name="Larimer F."/>
            <person name="Land M.L."/>
            <person name="Hauser L.J."/>
            <person name="Kyrpides N.C."/>
            <person name="Ovchinnikova G."/>
            <person name="Kathariou S."/>
            <person name="Ramaley R.F."/>
            <person name="Rodrigues D.F."/>
            <person name="Hendrix C."/>
            <person name="Richardson P."/>
            <person name="Tiedje J.M."/>
        </authorList>
    </citation>
    <scope>NUCLEOTIDE SEQUENCE [LARGE SCALE GENOMIC DNA]</scope>
    <source>
        <strain>ATCC BAA-1283 / AT1b</strain>
    </source>
</reference>
<gene>
    <name evidence="1" type="primary">rplU</name>
    <name type="ordered locus">EAT1b_2678</name>
</gene>
<organism>
    <name type="scientific">Exiguobacterium sp. (strain ATCC BAA-1283 / AT1b)</name>
    <dbReference type="NCBI Taxonomy" id="360911"/>
    <lineage>
        <taxon>Bacteria</taxon>
        <taxon>Bacillati</taxon>
        <taxon>Bacillota</taxon>
        <taxon>Bacilli</taxon>
        <taxon>Bacillales</taxon>
        <taxon>Bacillales Family XII. Incertae Sedis</taxon>
        <taxon>Exiguobacterium</taxon>
    </lineage>
</organism>
<name>RL21_EXISA</name>
<proteinExistence type="inferred from homology"/>
<evidence type="ECO:0000255" key="1">
    <source>
        <dbReference type="HAMAP-Rule" id="MF_01363"/>
    </source>
</evidence>
<evidence type="ECO:0000305" key="2"/>
<sequence length="102" mass="11315">MYAIIKTGGKQIKVEAGQEIYIEKLDADVEGTVEFGEVLFVGGDDVKVGAPLVEGAKVVGTVVKHGRAKKITVFKMKAKKNYRRKQGHRQPYTKVRIEKIEA</sequence>
<comment type="function">
    <text evidence="1">This protein binds to 23S rRNA in the presence of protein L20.</text>
</comment>
<comment type="subunit">
    <text evidence="1">Part of the 50S ribosomal subunit. Contacts protein L20.</text>
</comment>
<comment type="similarity">
    <text evidence="1">Belongs to the bacterial ribosomal protein bL21 family.</text>
</comment>
<protein>
    <recommendedName>
        <fullName evidence="1">Large ribosomal subunit protein bL21</fullName>
    </recommendedName>
    <alternativeName>
        <fullName evidence="2">50S ribosomal protein L21</fullName>
    </alternativeName>
</protein>
<dbReference type="EMBL" id="CP001615">
    <property type="protein sequence ID" value="ACQ71594.1"/>
    <property type="molecule type" value="Genomic_DNA"/>
</dbReference>
<dbReference type="RefSeq" id="WP_015881153.1">
    <property type="nucleotide sequence ID" value="NZ_MOEL01000013.1"/>
</dbReference>
<dbReference type="SMR" id="C4L4N1"/>
<dbReference type="STRING" id="360911.EAT1b_2678"/>
<dbReference type="GeneID" id="94372660"/>
<dbReference type="KEGG" id="eat:EAT1b_2678"/>
<dbReference type="eggNOG" id="COG0261">
    <property type="taxonomic scope" value="Bacteria"/>
</dbReference>
<dbReference type="HOGENOM" id="CLU_061463_3_2_9"/>
<dbReference type="OrthoDB" id="9813334at2"/>
<dbReference type="Proteomes" id="UP000000716">
    <property type="component" value="Chromosome"/>
</dbReference>
<dbReference type="GO" id="GO:0005737">
    <property type="term" value="C:cytoplasm"/>
    <property type="evidence" value="ECO:0007669"/>
    <property type="project" value="UniProtKB-ARBA"/>
</dbReference>
<dbReference type="GO" id="GO:1990904">
    <property type="term" value="C:ribonucleoprotein complex"/>
    <property type="evidence" value="ECO:0007669"/>
    <property type="project" value="UniProtKB-KW"/>
</dbReference>
<dbReference type="GO" id="GO:0005840">
    <property type="term" value="C:ribosome"/>
    <property type="evidence" value="ECO:0007669"/>
    <property type="project" value="UniProtKB-KW"/>
</dbReference>
<dbReference type="GO" id="GO:0019843">
    <property type="term" value="F:rRNA binding"/>
    <property type="evidence" value="ECO:0007669"/>
    <property type="project" value="UniProtKB-UniRule"/>
</dbReference>
<dbReference type="GO" id="GO:0003735">
    <property type="term" value="F:structural constituent of ribosome"/>
    <property type="evidence" value="ECO:0007669"/>
    <property type="project" value="InterPro"/>
</dbReference>
<dbReference type="GO" id="GO:0006412">
    <property type="term" value="P:translation"/>
    <property type="evidence" value="ECO:0007669"/>
    <property type="project" value="UniProtKB-UniRule"/>
</dbReference>
<dbReference type="HAMAP" id="MF_01363">
    <property type="entry name" value="Ribosomal_bL21"/>
    <property type="match status" value="1"/>
</dbReference>
<dbReference type="InterPro" id="IPR028909">
    <property type="entry name" value="bL21-like"/>
</dbReference>
<dbReference type="InterPro" id="IPR036164">
    <property type="entry name" value="bL21-like_sf"/>
</dbReference>
<dbReference type="InterPro" id="IPR001787">
    <property type="entry name" value="Ribosomal_bL21"/>
</dbReference>
<dbReference type="InterPro" id="IPR018258">
    <property type="entry name" value="Ribosomal_bL21_CS"/>
</dbReference>
<dbReference type="NCBIfam" id="TIGR00061">
    <property type="entry name" value="L21"/>
    <property type="match status" value="1"/>
</dbReference>
<dbReference type="PANTHER" id="PTHR21349">
    <property type="entry name" value="50S RIBOSOMAL PROTEIN L21"/>
    <property type="match status" value="1"/>
</dbReference>
<dbReference type="PANTHER" id="PTHR21349:SF0">
    <property type="entry name" value="LARGE RIBOSOMAL SUBUNIT PROTEIN BL21M"/>
    <property type="match status" value="1"/>
</dbReference>
<dbReference type="Pfam" id="PF00829">
    <property type="entry name" value="Ribosomal_L21p"/>
    <property type="match status" value="1"/>
</dbReference>
<dbReference type="SUPFAM" id="SSF141091">
    <property type="entry name" value="L21p-like"/>
    <property type="match status" value="1"/>
</dbReference>
<dbReference type="PROSITE" id="PS01169">
    <property type="entry name" value="RIBOSOMAL_L21"/>
    <property type="match status" value="1"/>
</dbReference>
<accession>C4L4N1</accession>
<keyword id="KW-0687">Ribonucleoprotein</keyword>
<keyword id="KW-0689">Ribosomal protein</keyword>
<keyword id="KW-0694">RNA-binding</keyword>
<keyword id="KW-0699">rRNA-binding</keyword>